<comment type="function">
    <text evidence="1">Catalyzes the condensation of (S)-aspartate-beta-semialdehyde [(S)-ASA] and pyruvate to 4-hydroxy-tetrahydrodipicolinate (HTPA).</text>
</comment>
<comment type="catalytic activity">
    <reaction evidence="1">
        <text>L-aspartate 4-semialdehyde + pyruvate = (2S,4S)-4-hydroxy-2,3,4,5-tetrahydrodipicolinate + H2O + H(+)</text>
        <dbReference type="Rhea" id="RHEA:34171"/>
        <dbReference type="ChEBI" id="CHEBI:15361"/>
        <dbReference type="ChEBI" id="CHEBI:15377"/>
        <dbReference type="ChEBI" id="CHEBI:15378"/>
        <dbReference type="ChEBI" id="CHEBI:67139"/>
        <dbReference type="ChEBI" id="CHEBI:537519"/>
        <dbReference type="EC" id="4.3.3.7"/>
    </reaction>
</comment>
<comment type="pathway">
    <text evidence="1">Amino-acid biosynthesis; L-lysine biosynthesis via DAP pathway; (S)-tetrahydrodipicolinate from L-aspartate: step 3/4.</text>
</comment>
<comment type="subunit">
    <text evidence="1">Homotetramer; dimer of dimers.</text>
</comment>
<comment type="subcellular location">
    <subcellularLocation>
        <location evidence="1">Cytoplasm</location>
    </subcellularLocation>
</comment>
<comment type="similarity">
    <text evidence="1">Belongs to the DapA family.</text>
</comment>
<comment type="caution">
    <text evidence="2">Was originally thought to be a dihydrodipicolinate synthase (DHDPS), catalyzing the condensation of (S)-aspartate-beta-semialdehyde [(S)-ASA] and pyruvate to dihydrodipicolinate (DHDP). However, it was shown in E.coli that the product of the enzymatic reaction is not dihydrodipicolinate but in fact (4S)-4-hydroxy-2,3,4,5-tetrahydro-(2S)-dipicolinic acid (HTPA), and that the consecutive dehydration reaction leading to DHDP is not spontaneous but catalyzed by DapB.</text>
</comment>
<feature type="chain" id="PRO_1000124050" description="4-hydroxy-tetrahydrodipicolinate synthase">
    <location>
        <begin position="1"/>
        <end position="289"/>
    </location>
</feature>
<feature type="active site" description="Proton donor/acceptor" evidence="1">
    <location>
        <position position="131"/>
    </location>
</feature>
<feature type="active site" description="Schiff-base intermediate with substrate" evidence="1">
    <location>
        <position position="160"/>
    </location>
</feature>
<feature type="binding site" evidence="1">
    <location>
        <position position="43"/>
    </location>
    <ligand>
        <name>pyruvate</name>
        <dbReference type="ChEBI" id="CHEBI:15361"/>
    </ligand>
</feature>
<feature type="binding site" evidence="1">
    <location>
        <position position="200"/>
    </location>
    <ligand>
        <name>pyruvate</name>
        <dbReference type="ChEBI" id="CHEBI:15361"/>
    </ligand>
</feature>
<feature type="site" description="Part of a proton relay during catalysis" evidence="1">
    <location>
        <position position="42"/>
    </location>
</feature>
<feature type="site" description="Part of a proton relay during catalysis" evidence="1">
    <location>
        <position position="105"/>
    </location>
</feature>
<reference key="1">
    <citation type="submission" date="2007-10" db="EMBL/GenBank/DDBJ databases">
        <title>Complete sequence of Methanococcus maripaludis C6.</title>
        <authorList>
            <consortium name="US DOE Joint Genome Institute"/>
            <person name="Copeland A."/>
            <person name="Lucas S."/>
            <person name="Lapidus A."/>
            <person name="Barry K."/>
            <person name="Glavina del Rio T."/>
            <person name="Dalin E."/>
            <person name="Tice H."/>
            <person name="Pitluck S."/>
            <person name="Clum A."/>
            <person name="Schmutz J."/>
            <person name="Larimer F."/>
            <person name="Land M."/>
            <person name="Hauser L."/>
            <person name="Kyrpides N."/>
            <person name="Mikhailova N."/>
            <person name="Sieprawska-Lupa M."/>
            <person name="Whitman W.B."/>
            <person name="Richardson P."/>
        </authorList>
    </citation>
    <scope>NUCLEOTIDE SEQUENCE [LARGE SCALE GENOMIC DNA]</scope>
    <source>
        <strain>C6 / ATCC BAA-1332</strain>
    </source>
</reference>
<dbReference type="EC" id="4.3.3.7" evidence="1"/>
<dbReference type="EMBL" id="CP000867">
    <property type="protein sequence ID" value="ABX01138.1"/>
    <property type="molecule type" value="Genomic_DNA"/>
</dbReference>
<dbReference type="SMR" id="A9A656"/>
<dbReference type="STRING" id="444158.MmarC6_0317"/>
<dbReference type="KEGG" id="mmx:MmarC6_0317"/>
<dbReference type="eggNOG" id="arCOG04172">
    <property type="taxonomic scope" value="Archaea"/>
</dbReference>
<dbReference type="HOGENOM" id="CLU_049343_7_1_2"/>
<dbReference type="OrthoDB" id="33636at2157"/>
<dbReference type="PhylomeDB" id="A9A656"/>
<dbReference type="UniPathway" id="UPA00034">
    <property type="reaction ID" value="UER00017"/>
</dbReference>
<dbReference type="GO" id="GO:0005737">
    <property type="term" value="C:cytoplasm"/>
    <property type="evidence" value="ECO:0007669"/>
    <property type="project" value="UniProtKB-SubCell"/>
</dbReference>
<dbReference type="GO" id="GO:0008675">
    <property type="term" value="F:2-dehydro-3-deoxy-phosphogluconate aldolase activity"/>
    <property type="evidence" value="ECO:0007669"/>
    <property type="project" value="UniProtKB-ARBA"/>
</dbReference>
<dbReference type="GO" id="GO:0008840">
    <property type="term" value="F:4-hydroxy-tetrahydrodipicolinate synthase activity"/>
    <property type="evidence" value="ECO:0007669"/>
    <property type="project" value="UniProtKB-UniRule"/>
</dbReference>
<dbReference type="GO" id="GO:0019877">
    <property type="term" value="P:diaminopimelate biosynthetic process"/>
    <property type="evidence" value="ECO:0007669"/>
    <property type="project" value="UniProtKB-UniRule"/>
</dbReference>
<dbReference type="GO" id="GO:0009089">
    <property type="term" value="P:lysine biosynthetic process via diaminopimelate"/>
    <property type="evidence" value="ECO:0007669"/>
    <property type="project" value="UniProtKB-UniRule"/>
</dbReference>
<dbReference type="CDD" id="cd00950">
    <property type="entry name" value="DHDPS"/>
    <property type="match status" value="1"/>
</dbReference>
<dbReference type="Gene3D" id="3.20.20.70">
    <property type="entry name" value="Aldolase class I"/>
    <property type="match status" value="1"/>
</dbReference>
<dbReference type="HAMAP" id="MF_00418">
    <property type="entry name" value="DapA"/>
    <property type="match status" value="1"/>
</dbReference>
<dbReference type="InterPro" id="IPR013785">
    <property type="entry name" value="Aldolase_TIM"/>
</dbReference>
<dbReference type="InterPro" id="IPR005263">
    <property type="entry name" value="DapA"/>
</dbReference>
<dbReference type="InterPro" id="IPR002220">
    <property type="entry name" value="DapA-like"/>
</dbReference>
<dbReference type="InterPro" id="IPR020625">
    <property type="entry name" value="Schiff_base-form_aldolases_AS"/>
</dbReference>
<dbReference type="InterPro" id="IPR020624">
    <property type="entry name" value="Schiff_base-form_aldolases_CS"/>
</dbReference>
<dbReference type="NCBIfam" id="TIGR00674">
    <property type="entry name" value="dapA"/>
    <property type="match status" value="1"/>
</dbReference>
<dbReference type="PANTHER" id="PTHR12128:SF66">
    <property type="entry name" value="4-HYDROXY-2-OXOGLUTARATE ALDOLASE, MITOCHONDRIAL"/>
    <property type="match status" value="1"/>
</dbReference>
<dbReference type="PANTHER" id="PTHR12128">
    <property type="entry name" value="DIHYDRODIPICOLINATE SYNTHASE"/>
    <property type="match status" value="1"/>
</dbReference>
<dbReference type="Pfam" id="PF00701">
    <property type="entry name" value="DHDPS"/>
    <property type="match status" value="1"/>
</dbReference>
<dbReference type="PIRSF" id="PIRSF001365">
    <property type="entry name" value="DHDPS"/>
    <property type="match status" value="1"/>
</dbReference>
<dbReference type="PRINTS" id="PR00146">
    <property type="entry name" value="DHPICSNTHASE"/>
</dbReference>
<dbReference type="SMART" id="SM01130">
    <property type="entry name" value="DHDPS"/>
    <property type="match status" value="1"/>
</dbReference>
<dbReference type="SUPFAM" id="SSF51569">
    <property type="entry name" value="Aldolase"/>
    <property type="match status" value="1"/>
</dbReference>
<dbReference type="PROSITE" id="PS00665">
    <property type="entry name" value="DHDPS_1"/>
    <property type="match status" value="1"/>
</dbReference>
<dbReference type="PROSITE" id="PS00666">
    <property type="entry name" value="DHDPS_2"/>
    <property type="match status" value="1"/>
</dbReference>
<name>DAPA_METM6</name>
<evidence type="ECO:0000255" key="1">
    <source>
        <dbReference type="HAMAP-Rule" id="MF_00418"/>
    </source>
</evidence>
<evidence type="ECO:0000305" key="2"/>
<organism>
    <name type="scientific">Methanococcus maripaludis (strain C6 / ATCC BAA-1332)</name>
    <dbReference type="NCBI Taxonomy" id="444158"/>
    <lineage>
        <taxon>Archaea</taxon>
        <taxon>Methanobacteriati</taxon>
        <taxon>Methanobacteriota</taxon>
        <taxon>Methanomada group</taxon>
        <taxon>Methanococci</taxon>
        <taxon>Methanococcales</taxon>
        <taxon>Methanococcaceae</taxon>
        <taxon>Methanococcus</taxon>
    </lineage>
</organism>
<gene>
    <name evidence="1" type="primary">dapA</name>
    <name type="ordered locus">MmarC6_0317</name>
</gene>
<proteinExistence type="inferred from homology"/>
<protein>
    <recommendedName>
        <fullName evidence="1">4-hydroxy-tetrahydrodipicolinate synthase</fullName>
        <shortName evidence="1">HTPA synthase</shortName>
        <ecNumber evidence="1">4.3.3.7</ecNumber>
    </recommendedName>
</protein>
<sequence>MQGVYPAIVTPFKDGKVDYDGLRTNIDYLIENGVSGVIPVGTTGESPTLTPLEHEKVIEKVVEFVDGRVEVIAGTGSNSTSEALEFSQYAEDVGVDGVLLITPYYNKPSQEGLKRHFGEIANSINVPIVLYNVPSRTALNIEPETIKYLFEEYSNITAIKEANPNLSQVSEVLDSCNIDVLSGNDELTLPIISLGGKGVVSVVANIAPKEFVQMVDFANAGKFDKAKEIHYKLFPLMKLMFIETNPIPIKTAMNMLGMPSGELRLPLCEMAESNKLKLQNALNNLGLLK</sequence>
<keyword id="KW-0028">Amino-acid biosynthesis</keyword>
<keyword id="KW-0963">Cytoplasm</keyword>
<keyword id="KW-0220">Diaminopimelate biosynthesis</keyword>
<keyword id="KW-0456">Lyase</keyword>
<keyword id="KW-0457">Lysine biosynthesis</keyword>
<keyword id="KW-0704">Schiff base</keyword>
<accession>A9A656</accession>